<comment type="similarity">
    <text evidence="1">Belongs to the bacterial ribosomal protein bL28 family.</text>
</comment>
<name>RL28_STUS1</name>
<gene>
    <name evidence="1" type="primary">rpmB</name>
    <name type="ordered locus">PST_0107</name>
</gene>
<evidence type="ECO:0000255" key="1">
    <source>
        <dbReference type="HAMAP-Rule" id="MF_00373"/>
    </source>
</evidence>
<evidence type="ECO:0000256" key="2">
    <source>
        <dbReference type="SAM" id="MobiDB-lite"/>
    </source>
</evidence>
<evidence type="ECO:0000305" key="3"/>
<proteinExistence type="inferred from homology"/>
<organism>
    <name type="scientific">Stutzerimonas stutzeri (strain A1501)</name>
    <name type="common">Pseudomonas stutzeri</name>
    <dbReference type="NCBI Taxonomy" id="379731"/>
    <lineage>
        <taxon>Bacteria</taxon>
        <taxon>Pseudomonadati</taxon>
        <taxon>Pseudomonadota</taxon>
        <taxon>Gammaproteobacteria</taxon>
        <taxon>Pseudomonadales</taxon>
        <taxon>Pseudomonadaceae</taxon>
        <taxon>Stutzerimonas</taxon>
    </lineage>
</organism>
<feature type="chain" id="PRO_1000007319" description="Large ribosomal subunit protein bL28">
    <location>
        <begin position="1"/>
        <end position="78"/>
    </location>
</feature>
<feature type="region of interest" description="Disordered" evidence="2">
    <location>
        <begin position="1"/>
        <end position="20"/>
    </location>
</feature>
<keyword id="KW-1185">Reference proteome</keyword>
<keyword id="KW-0687">Ribonucleoprotein</keyword>
<keyword id="KW-0689">Ribosomal protein</keyword>
<reference key="1">
    <citation type="journal article" date="2008" name="Proc. Natl. Acad. Sci. U.S.A.">
        <title>Nitrogen fixation island and rhizosphere competence traits in the genome of root-associated Pseudomonas stutzeri A1501.</title>
        <authorList>
            <person name="Yan Y."/>
            <person name="Yang J."/>
            <person name="Dou Y."/>
            <person name="Chen M."/>
            <person name="Ping S."/>
            <person name="Peng J."/>
            <person name="Lu W."/>
            <person name="Zhang W."/>
            <person name="Yao Z."/>
            <person name="Li H."/>
            <person name="Liu W."/>
            <person name="He S."/>
            <person name="Geng L."/>
            <person name="Zhang X."/>
            <person name="Yang F."/>
            <person name="Yu H."/>
            <person name="Zhan Y."/>
            <person name="Li D."/>
            <person name="Lin Z."/>
            <person name="Wang Y."/>
            <person name="Elmerich C."/>
            <person name="Lin M."/>
            <person name="Jin Q."/>
        </authorList>
    </citation>
    <scope>NUCLEOTIDE SEQUENCE [LARGE SCALE GENOMIC DNA]</scope>
    <source>
        <strain>A1501</strain>
    </source>
</reference>
<sequence>MSRVCQVTGKGPVTGNNISHANNKTRRRFLPNLQHHRFWVESEKRFVRLRVSAKGMRVIDKRGIDVVLAELRARGEKV</sequence>
<protein>
    <recommendedName>
        <fullName evidence="1">Large ribosomal subunit protein bL28</fullName>
    </recommendedName>
    <alternativeName>
        <fullName evidence="3">50S ribosomal protein L28</fullName>
    </alternativeName>
</protein>
<dbReference type="EMBL" id="CP000304">
    <property type="protein sequence ID" value="ABP77814.1"/>
    <property type="molecule type" value="Genomic_DNA"/>
</dbReference>
<dbReference type="RefSeq" id="WP_003242523.1">
    <property type="nucleotide sequence ID" value="NC_009434.1"/>
</dbReference>
<dbReference type="SMR" id="A4VFR3"/>
<dbReference type="GeneID" id="83644119"/>
<dbReference type="KEGG" id="psa:PST_0107"/>
<dbReference type="eggNOG" id="COG0227">
    <property type="taxonomic scope" value="Bacteria"/>
</dbReference>
<dbReference type="HOGENOM" id="CLU_064548_3_1_6"/>
<dbReference type="Proteomes" id="UP000000233">
    <property type="component" value="Chromosome"/>
</dbReference>
<dbReference type="GO" id="GO:0022625">
    <property type="term" value="C:cytosolic large ribosomal subunit"/>
    <property type="evidence" value="ECO:0007669"/>
    <property type="project" value="TreeGrafter"/>
</dbReference>
<dbReference type="GO" id="GO:0003735">
    <property type="term" value="F:structural constituent of ribosome"/>
    <property type="evidence" value="ECO:0007669"/>
    <property type="project" value="InterPro"/>
</dbReference>
<dbReference type="GO" id="GO:0006412">
    <property type="term" value="P:translation"/>
    <property type="evidence" value="ECO:0007669"/>
    <property type="project" value="UniProtKB-UniRule"/>
</dbReference>
<dbReference type="FunFam" id="2.30.170.40:FF:000001">
    <property type="entry name" value="50S ribosomal protein L28"/>
    <property type="match status" value="1"/>
</dbReference>
<dbReference type="Gene3D" id="2.30.170.40">
    <property type="entry name" value="Ribosomal protein L28/L24"/>
    <property type="match status" value="1"/>
</dbReference>
<dbReference type="HAMAP" id="MF_00373">
    <property type="entry name" value="Ribosomal_bL28"/>
    <property type="match status" value="1"/>
</dbReference>
<dbReference type="InterPro" id="IPR026569">
    <property type="entry name" value="Ribosomal_bL28"/>
</dbReference>
<dbReference type="InterPro" id="IPR034704">
    <property type="entry name" value="Ribosomal_bL28/bL31-like_sf"/>
</dbReference>
<dbReference type="InterPro" id="IPR001383">
    <property type="entry name" value="Ribosomal_bL28_bact-type"/>
</dbReference>
<dbReference type="InterPro" id="IPR037147">
    <property type="entry name" value="Ribosomal_bL28_sf"/>
</dbReference>
<dbReference type="NCBIfam" id="TIGR00009">
    <property type="entry name" value="L28"/>
    <property type="match status" value="1"/>
</dbReference>
<dbReference type="PANTHER" id="PTHR13528">
    <property type="entry name" value="39S RIBOSOMAL PROTEIN L28, MITOCHONDRIAL"/>
    <property type="match status" value="1"/>
</dbReference>
<dbReference type="PANTHER" id="PTHR13528:SF2">
    <property type="entry name" value="LARGE RIBOSOMAL SUBUNIT PROTEIN BL28M"/>
    <property type="match status" value="1"/>
</dbReference>
<dbReference type="Pfam" id="PF00830">
    <property type="entry name" value="Ribosomal_L28"/>
    <property type="match status" value="1"/>
</dbReference>
<dbReference type="SUPFAM" id="SSF143800">
    <property type="entry name" value="L28p-like"/>
    <property type="match status" value="1"/>
</dbReference>
<accession>A4VFR3</accession>